<gene>
    <name evidence="1" type="primary">ycgL</name>
    <name type="ordered locus">STM1813</name>
</gene>
<sequence length="110" mass="12585">MRQVTIPLIQSKSMFCVIYRSSKRDQTYLYVEKKDDFSRVPEALMKGFGQPQLAMMLPLDGRKKLVNAELEKVKQALSEQGYYLQLPPPPEDLLKQHLSSVGQNTSPADR</sequence>
<dbReference type="EMBL" id="AE006468">
    <property type="protein sequence ID" value="AAL20728.1"/>
    <property type="molecule type" value="Genomic_DNA"/>
</dbReference>
<dbReference type="RefSeq" id="NP_460769.1">
    <property type="nucleotide sequence ID" value="NC_003197.2"/>
</dbReference>
<dbReference type="RefSeq" id="WP_001250286.1">
    <property type="nucleotide sequence ID" value="NC_003197.2"/>
</dbReference>
<dbReference type="SMR" id="Q8ZP11"/>
<dbReference type="STRING" id="99287.STM1813"/>
<dbReference type="PaxDb" id="99287-STM1813"/>
<dbReference type="GeneID" id="1253332"/>
<dbReference type="KEGG" id="stm:STM1813"/>
<dbReference type="PATRIC" id="fig|99287.12.peg.1913"/>
<dbReference type="HOGENOM" id="CLU_155118_1_0_6"/>
<dbReference type="OMA" id="MICAVYK"/>
<dbReference type="PhylomeDB" id="Q8ZP11"/>
<dbReference type="BioCyc" id="SENT99287:STM1813-MONOMER"/>
<dbReference type="Proteomes" id="UP000001014">
    <property type="component" value="Chromosome"/>
</dbReference>
<dbReference type="Gene3D" id="3.10.510.20">
    <property type="entry name" value="YcgL domain"/>
    <property type="match status" value="1"/>
</dbReference>
<dbReference type="HAMAP" id="MF_01866">
    <property type="entry name" value="UPF0745"/>
    <property type="match status" value="1"/>
</dbReference>
<dbReference type="InterPro" id="IPR038068">
    <property type="entry name" value="YcgL-like_sf"/>
</dbReference>
<dbReference type="InterPro" id="IPR027354">
    <property type="entry name" value="YcgL_dom"/>
</dbReference>
<dbReference type="PANTHER" id="PTHR38109">
    <property type="entry name" value="PROTEIN YCGL"/>
    <property type="match status" value="1"/>
</dbReference>
<dbReference type="PANTHER" id="PTHR38109:SF1">
    <property type="entry name" value="PROTEIN YCGL"/>
    <property type="match status" value="1"/>
</dbReference>
<dbReference type="Pfam" id="PF05166">
    <property type="entry name" value="YcgL"/>
    <property type="match status" value="1"/>
</dbReference>
<dbReference type="SUPFAM" id="SSF160191">
    <property type="entry name" value="YcgL-like"/>
    <property type="match status" value="1"/>
</dbReference>
<dbReference type="PROSITE" id="PS51648">
    <property type="entry name" value="YCGL"/>
    <property type="match status" value="1"/>
</dbReference>
<organism>
    <name type="scientific">Salmonella typhimurium (strain LT2 / SGSC1412 / ATCC 700720)</name>
    <dbReference type="NCBI Taxonomy" id="99287"/>
    <lineage>
        <taxon>Bacteria</taxon>
        <taxon>Pseudomonadati</taxon>
        <taxon>Pseudomonadota</taxon>
        <taxon>Gammaproteobacteria</taxon>
        <taxon>Enterobacterales</taxon>
        <taxon>Enterobacteriaceae</taxon>
        <taxon>Salmonella</taxon>
    </lineage>
</organism>
<accession>Q8ZP11</accession>
<keyword id="KW-1185">Reference proteome</keyword>
<proteinExistence type="inferred from homology"/>
<protein>
    <recommendedName>
        <fullName evidence="1">Protein YcgL</fullName>
    </recommendedName>
</protein>
<evidence type="ECO:0000255" key="1">
    <source>
        <dbReference type="HAMAP-Rule" id="MF_01866"/>
    </source>
</evidence>
<evidence type="ECO:0000256" key="2">
    <source>
        <dbReference type="SAM" id="MobiDB-lite"/>
    </source>
</evidence>
<reference key="1">
    <citation type="journal article" date="2001" name="Nature">
        <title>Complete genome sequence of Salmonella enterica serovar Typhimurium LT2.</title>
        <authorList>
            <person name="McClelland M."/>
            <person name="Sanderson K.E."/>
            <person name="Spieth J."/>
            <person name="Clifton S.W."/>
            <person name="Latreille P."/>
            <person name="Courtney L."/>
            <person name="Porwollik S."/>
            <person name="Ali J."/>
            <person name="Dante M."/>
            <person name="Du F."/>
            <person name="Hou S."/>
            <person name="Layman D."/>
            <person name="Leonard S."/>
            <person name="Nguyen C."/>
            <person name="Scott K."/>
            <person name="Holmes A."/>
            <person name="Grewal N."/>
            <person name="Mulvaney E."/>
            <person name="Ryan E."/>
            <person name="Sun H."/>
            <person name="Florea L."/>
            <person name="Miller W."/>
            <person name="Stoneking T."/>
            <person name="Nhan M."/>
            <person name="Waterston R."/>
            <person name="Wilson R.K."/>
        </authorList>
    </citation>
    <scope>NUCLEOTIDE SEQUENCE [LARGE SCALE GENOMIC DNA]</scope>
    <source>
        <strain>LT2 / SGSC1412 / ATCC 700720</strain>
    </source>
</reference>
<name>YCGL_SALTY</name>
<feature type="chain" id="PRO_0000375361" description="Protein YcgL">
    <location>
        <begin position="1"/>
        <end position="110"/>
    </location>
</feature>
<feature type="domain" description="YcgL" evidence="1">
    <location>
        <begin position="14"/>
        <end position="98"/>
    </location>
</feature>
<feature type="region of interest" description="Disordered" evidence="2">
    <location>
        <begin position="87"/>
        <end position="110"/>
    </location>
</feature>
<feature type="compositionally biased region" description="Polar residues" evidence="2">
    <location>
        <begin position="97"/>
        <end position="110"/>
    </location>
</feature>